<sequence>MARLSEAEITEHLAQRPDWSLENNNEIVRTFRLANFPAAIAFVTHVAFLAEAAGHHPDIDIRYNRVRIALTTHDAGGLTEKDFALAAAIDEILG</sequence>
<keyword id="KW-0456">Lyase</keyword>
<feature type="chain" id="PRO_1000134948" description="Putative pterin-4-alpha-carbinolamine dehydratase">
    <location>
        <begin position="1"/>
        <end position="94"/>
    </location>
</feature>
<comment type="catalytic activity">
    <reaction evidence="1">
        <text>(4aS,6R)-4a-hydroxy-L-erythro-5,6,7,8-tetrahydrobiopterin = (6R)-L-erythro-6,7-dihydrobiopterin + H2O</text>
        <dbReference type="Rhea" id="RHEA:11920"/>
        <dbReference type="ChEBI" id="CHEBI:15377"/>
        <dbReference type="ChEBI" id="CHEBI:15642"/>
        <dbReference type="ChEBI" id="CHEBI:43120"/>
        <dbReference type="EC" id="4.2.1.96"/>
    </reaction>
</comment>
<comment type="similarity">
    <text evidence="1">Belongs to the pterin-4-alpha-carbinolamine dehydratase family.</text>
</comment>
<reference key="1">
    <citation type="submission" date="2008-12" db="EMBL/GenBank/DDBJ databases">
        <title>Complete sequence of Chloroflexus aggregans DSM 9485.</title>
        <authorList>
            <consortium name="US DOE Joint Genome Institute"/>
            <person name="Lucas S."/>
            <person name="Copeland A."/>
            <person name="Lapidus A."/>
            <person name="Glavina del Rio T."/>
            <person name="Dalin E."/>
            <person name="Tice H."/>
            <person name="Pitluck S."/>
            <person name="Foster B."/>
            <person name="Larimer F."/>
            <person name="Land M."/>
            <person name="Hauser L."/>
            <person name="Kyrpides N."/>
            <person name="Mikhailova N."/>
            <person name="Bryant D.A."/>
            <person name="Richardson P."/>
        </authorList>
    </citation>
    <scope>NUCLEOTIDE SEQUENCE [LARGE SCALE GENOMIC DNA]</scope>
    <source>
        <strain>MD-66 / DSM 9485</strain>
    </source>
</reference>
<gene>
    <name type="ordered locus">Cagg_0395</name>
</gene>
<proteinExistence type="inferred from homology"/>
<dbReference type="EC" id="4.2.1.96" evidence="1"/>
<dbReference type="EMBL" id="CP001337">
    <property type="protein sequence ID" value="ACL23340.1"/>
    <property type="molecule type" value="Genomic_DNA"/>
</dbReference>
<dbReference type="RefSeq" id="WP_012615706.1">
    <property type="nucleotide sequence ID" value="NC_011831.1"/>
</dbReference>
<dbReference type="SMR" id="B8G3F7"/>
<dbReference type="STRING" id="326427.Cagg_0395"/>
<dbReference type="KEGG" id="cag:Cagg_0395"/>
<dbReference type="eggNOG" id="COG2154">
    <property type="taxonomic scope" value="Bacteria"/>
</dbReference>
<dbReference type="HOGENOM" id="CLU_081974_4_0_0"/>
<dbReference type="OrthoDB" id="9800108at2"/>
<dbReference type="Proteomes" id="UP000002508">
    <property type="component" value="Chromosome"/>
</dbReference>
<dbReference type="GO" id="GO:0008124">
    <property type="term" value="F:4-alpha-hydroxytetrahydrobiopterin dehydratase activity"/>
    <property type="evidence" value="ECO:0007669"/>
    <property type="project" value="UniProtKB-UniRule"/>
</dbReference>
<dbReference type="GO" id="GO:0006729">
    <property type="term" value="P:tetrahydrobiopterin biosynthetic process"/>
    <property type="evidence" value="ECO:0007669"/>
    <property type="project" value="InterPro"/>
</dbReference>
<dbReference type="CDD" id="cd00488">
    <property type="entry name" value="PCD_DCoH"/>
    <property type="match status" value="1"/>
</dbReference>
<dbReference type="Gene3D" id="3.30.1360.20">
    <property type="entry name" value="Transcriptional coactivator/pterin dehydratase"/>
    <property type="match status" value="1"/>
</dbReference>
<dbReference type="HAMAP" id="MF_00434">
    <property type="entry name" value="Pterin_4_alpha"/>
    <property type="match status" value="1"/>
</dbReference>
<dbReference type="InterPro" id="IPR036428">
    <property type="entry name" value="PCD_sf"/>
</dbReference>
<dbReference type="InterPro" id="IPR001533">
    <property type="entry name" value="Pterin_deHydtase"/>
</dbReference>
<dbReference type="NCBIfam" id="NF002017">
    <property type="entry name" value="PRK00823.1-2"/>
    <property type="match status" value="1"/>
</dbReference>
<dbReference type="PANTHER" id="PTHR12599">
    <property type="entry name" value="PTERIN-4-ALPHA-CARBINOLAMINE DEHYDRATASE"/>
    <property type="match status" value="1"/>
</dbReference>
<dbReference type="PANTHER" id="PTHR12599:SF0">
    <property type="entry name" value="PTERIN-4-ALPHA-CARBINOLAMINE DEHYDRATASE"/>
    <property type="match status" value="1"/>
</dbReference>
<dbReference type="Pfam" id="PF01329">
    <property type="entry name" value="Pterin_4a"/>
    <property type="match status" value="1"/>
</dbReference>
<dbReference type="SUPFAM" id="SSF55248">
    <property type="entry name" value="PCD-like"/>
    <property type="match status" value="1"/>
</dbReference>
<protein>
    <recommendedName>
        <fullName evidence="1">Putative pterin-4-alpha-carbinolamine dehydratase</fullName>
        <shortName evidence="1">PHS</shortName>
        <ecNumber evidence="1">4.2.1.96</ecNumber>
    </recommendedName>
    <alternativeName>
        <fullName evidence="1">4-alpha-hydroxy-tetrahydropterin dehydratase</fullName>
    </alternativeName>
    <alternativeName>
        <fullName evidence="1">Pterin carbinolamine dehydratase</fullName>
        <shortName evidence="1">PCD</shortName>
    </alternativeName>
</protein>
<organism>
    <name type="scientific">Chloroflexus aggregans (strain MD-66 / DSM 9485)</name>
    <dbReference type="NCBI Taxonomy" id="326427"/>
    <lineage>
        <taxon>Bacteria</taxon>
        <taxon>Bacillati</taxon>
        <taxon>Chloroflexota</taxon>
        <taxon>Chloroflexia</taxon>
        <taxon>Chloroflexales</taxon>
        <taxon>Chloroflexineae</taxon>
        <taxon>Chloroflexaceae</taxon>
        <taxon>Chloroflexus</taxon>
    </lineage>
</organism>
<accession>B8G3F7</accession>
<name>PHS_CHLAD</name>
<evidence type="ECO:0000255" key="1">
    <source>
        <dbReference type="HAMAP-Rule" id="MF_00434"/>
    </source>
</evidence>